<reference key="1">
    <citation type="journal article" date="1996" name="J. Biol. Chem.">
        <title>Expression of the chlI, chlD, and chlH genes from the Cyanobacterium synechocystis PCC6803 in Escherichia coli and demonstration that the three cognate proteins are required for magnesium-protoporphyrin chelatase activity.</title>
        <authorList>
            <person name="Jensen P.E."/>
            <person name="Gibson L.C.D."/>
            <person name="Henningsen K.W."/>
            <person name="Hunter C.N."/>
        </authorList>
    </citation>
    <scope>NUCLEOTIDE SEQUENCE [GENOMIC DNA]</scope>
</reference>
<reference key="2">
    <citation type="journal article" date="1996" name="DNA Res.">
        <title>Sequence analysis of the genome of the unicellular cyanobacterium Synechocystis sp. strain PCC6803. II. Sequence determination of the entire genome and assignment of potential protein-coding regions.</title>
        <authorList>
            <person name="Kaneko T."/>
            <person name="Sato S."/>
            <person name="Kotani H."/>
            <person name="Tanaka A."/>
            <person name="Asamizu E."/>
            <person name="Nakamura Y."/>
            <person name="Miyajima N."/>
            <person name="Hirosawa M."/>
            <person name="Sugiura M."/>
            <person name="Sasamoto S."/>
            <person name="Kimura T."/>
            <person name="Hosouchi T."/>
            <person name="Matsuno A."/>
            <person name="Muraki A."/>
            <person name="Nakazaki N."/>
            <person name="Naruo K."/>
            <person name="Okumura S."/>
            <person name="Shimpo S."/>
            <person name="Takeuchi C."/>
            <person name="Wada T."/>
            <person name="Watanabe A."/>
            <person name="Yamada M."/>
            <person name="Yasuda M."/>
            <person name="Tabata S."/>
        </authorList>
    </citation>
    <scope>NUCLEOTIDE SEQUENCE [LARGE SCALE GENOMIC DNA]</scope>
    <source>
        <strain>ATCC 27184 / PCC 6803 / Kazusa</strain>
    </source>
</reference>
<sequence length="357" mass="39463">MTATLAAPSKTRRVVFPFTAIVGQDEMKLALLLNVIDPKIGGVMIMGDRGTGKSTTIRALADLLPEIEVVANDPFNSSPSDPEMMSEEVRIRVDSQEPLSIVKKKVTMVDLPLGATEDRVCGTIDIEKALSEGVKAFEPGLLAKANRGILYVDEVNLLDDHLVDVLLDSAAGGWNTVEREGISIRHPARFVLVGSGNPEEGELRPQLLDRFGMHAEIRTVREPELRVKIVEQRTEFDQNPHPFCDQYQTEQEALQAKIVNAQNLLPQVTIDYDYRVKVSEVCAELDVDGLRGDIVTNRAAKALAAFEGRTEVTVDDISRVIVLCLRHRLRKDPLESIDSGSKVEKVFKRVFGVVDEA</sequence>
<gene>
    <name type="primary">chlI</name>
    <name type="ordered locus">slr1030</name>
</gene>
<keyword id="KW-0002">3D-structure</keyword>
<keyword id="KW-0067">ATP-binding</keyword>
<keyword id="KW-0149">Chlorophyll biosynthesis</keyword>
<keyword id="KW-0436">Ligase</keyword>
<keyword id="KW-0547">Nucleotide-binding</keyword>
<keyword id="KW-0602">Photosynthesis</keyword>
<keyword id="KW-1185">Reference proteome</keyword>
<dbReference type="EC" id="6.6.1.1"/>
<dbReference type="EMBL" id="U35144">
    <property type="protein sequence ID" value="AAC44138.1"/>
    <property type="molecule type" value="Genomic_DNA"/>
</dbReference>
<dbReference type="EMBL" id="BA000022">
    <property type="protein sequence ID" value="BAA17166.1"/>
    <property type="molecule type" value="Genomic_DNA"/>
</dbReference>
<dbReference type="PIR" id="S75252">
    <property type="entry name" value="S75252"/>
</dbReference>
<dbReference type="PIR" id="T46868">
    <property type="entry name" value="T46868"/>
</dbReference>
<dbReference type="PDB" id="6L8D">
    <property type="method" value="X-ray"/>
    <property type="resolution" value="2.91 A"/>
    <property type="chains" value="A/B/C/D/E/F=1-357"/>
</dbReference>
<dbReference type="PDBsum" id="6L8D"/>
<dbReference type="SMR" id="P51634"/>
<dbReference type="IntAct" id="P51634">
    <property type="interactions" value="1"/>
</dbReference>
<dbReference type="STRING" id="1148.gene:10498029"/>
<dbReference type="PaxDb" id="1148-1652243"/>
<dbReference type="EnsemblBacteria" id="BAA17166">
    <property type="protein sequence ID" value="BAA17166"/>
    <property type="gene ID" value="BAA17166"/>
</dbReference>
<dbReference type="KEGG" id="syn:slr1030"/>
<dbReference type="eggNOG" id="COG1239">
    <property type="taxonomic scope" value="Bacteria"/>
</dbReference>
<dbReference type="InParanoid" id="P51634"/>
<dbReference type="PhylomeDB" id="P51634"/>
<dbReference type="BRENDA" id="6.6.1.1">
    <property type="organism ID" value="382"/>
</dbReference>
<dbReference type="SABIO-RK" id="P51634"/>
<dbReference type="UniPathway" id="UPA00668"/>
<dbReference type="Proteomes" id="UP000001425">
    <property type="component" value="Chromosome"/>
</dbReference>
<dbReference type="GO" id="GO:0005524">
    <property type="term" value="F:ATP binding"/>
    <property type="evidence" value="ECO:0007669"/>
    <property type="project" value="UniProtKB-KW"/>
</dbReference>
<dbReference type="GO" id="GO:0016887">
    <property type="term" value="F:ATP hydrolysis activity"/>
    <property type="evidence" value="ECO:0007669"/>
    <property type="project" value="InterPro"/>
</dbReference>
<dbReference type="GO" id="GO:0016851">
    <property type="term" value="F:magnesium chelatase activity"/>
    <property type="evidence" value="ECO:0007669"/>
    <property type="project" value="UniProtKB-EC"/>
</dbReference>
<dbReference type="GO" id="GO:0015995">
    <property type="term" value="P:chlorophyll biosynthetic process"/>
    <property type="evidence" value="ECO:0007669"/>
    <property type="project" value="UniProtKB-UniPathway"/>
</dbReference>
<dbReference type="GO" id="GO:0015979">
    <property type="term" value="P:photosynthesis"/>
    <property type="evidence" value="ECO:0007669"/>
    <property type="project" value="UniProtKB-KW"/>
</dbReference>
<dbReference type="CDD" id="cd00009">
    <property type="entry name" value="AAA"/>
    <property type="match status" value="1"/>
</dbReference>
<dbReference type="FunFam" id="1.10.8.80:FF:000001">
    <property type="entry name" value="Mg-protoporphyrin IX chelatase"/>
    <property type="match status" value="1"/>
</dbReference>
<dbReference type="FunFam" id="3.40.50.300:FF:000601">
    <property type="entry name" value="Mg-protoporphyrin IX chelatase"/>
    <property type="match status" value="1"/>
</dbReference>
<dbReference type="Gene3D" id="1.10.8.80">
    <property type="entry name" value="Magnesium chelatase subunit I, C-Terminal domain"/>
    <property type="match status" value="1"/>
</dbReference>
<dbReference type="Gene3D" id="3.40.50.300">
    <property type="entry name" value="P-loop containing nucleotide triphosphate hydrolases"/>
    <property type="match status" value="1"/>
</dbReference>
<dbReference type="InterPro" id="IPR003593">
    <property type="entry name" value="AAA+_ATPase"/>
</dbReference>
<dbReference type="InterPro" id="IPR045006">
    <property type="entry name" value="CHLI-like"/>
</dbReference>
<dbReference type="InterPro" id="IPR041628">
    <property type="entry name" value="ChlI/MoxR_AAA_lid"/>
</dbReference>
<dbReference type="InterPro" id="IPR011775">
    <property type="entry name" value="Mg_chelatase_ATPase-isu"/>
</dbReference>
<dbReference type="InterPro" id="IPR000523">
    <property type="entry name" value="Mg_chelatse_chII-like_cat_dom"/>
</dbReference>
<dbReference type="InterPro" id="IPR027417">
    <property type="entry name" value="P-loop_NTPase"/>
</dbReference>
<dbReference type="NCBIfam" id="TIGR02030">
    <property type="entry name" value="BchI-ChlI"/>
    <property type="match status" value="1"/>
</dbReference>
<dbReference type="PANTHER" id="PTHR32039">
    <property type="entry name" value="MAGNESIUM-CHELATASE SUBUNIT CHLI"/>
    <property type="match status" value="1"/>
</dbReference>
<dbReference type="PANTHER" id="PTHR32039:SF9">
    <property type="entry name" value="MAGNESIUM-CHELATASE SUBUNIT CHLI-2, CHLOROPLASTIC"/>
    <property type="match status" value="1"/>
</dbReference>
<dbReference type="Pfam" id="PF17863">
    <property type="entry name" value="AAA_lid_2"/>
    <property type="match status" value="1"/>
</dbReference>
<dbReference type="Pfam" id="PF01078">
    <property type="entry name" value="Mg_chelatase"/>
    <property type="match status" value="1"/>
</dbReference>
<dbReference type="SMART" id="SM00382">
    <property type="entry name" value="AAA"/>
    <property type="match status" value="1"/>
</dbReference>
<dbReference type="SUPFAM" id="SSF52540">
    <property type="entry name" value="P-loop containing nucleoside triphosphate hydrolases"/>
    <property type="match status" value="1"/>
</dbReference>
<feature type="chain" id="PRO_0000206863" description="Magnesium-chelatase subunit ChlI">
    <location>
        <begin position="1"/>
        <end position="357"/>
    </location>
</feature>
<feature type="binding site" evidence="1">
    <location>
        <begin position="47"/>
        <end position="54"/>
    </location>
    <ligand>
        <name>ATP</name>
        <dbReference type="ChEBI" id="CHEBI:30616"/>
    </ligand>
</feature>
<feature type="sequence conflict" description="In Ref. 1; AAC44138." evidence="2" ref="1">
    <original>A</original>
    <variation>T</variation>
    <location>
        <position position="170"/>
    </location>
</feature>
<feature type="sequence conflict" description="In Ref. 1; AAC44138." evidence="2" ref="1">
    <original>ALAAF</original>
    <variation>PWPLL</variation>
    <location>
        <begin position="302"/>
        <end position="306"/>
    </location>
</feature>
<feature type="helix" evidence="3">
    <location>
        <begin position="18"/>
        <end position="20"/>
    </location>
</feature>
<feature type="helix" evidence="3">
    <location>
        <begin position="25"/>
        <end position="36"/>
    </location>
</feature>
<feature type="helix" evidence="3">
    <location>
        <begin position="38"/>
        <end position="40"/>
    </location>
</feature>
<feature type="strand" evidence="3">
    <location>
        <begin position="43"/>
        <end position="47"/>
    </location>
</feature>
<feature type="strand" evidence="3">
    <location>
        <begin position="49"/>
        <end position="51"/>
    </location>
</feature>
<feature type="helix" evidence="3">
    <location>
        <begin position="53"/>
        <end position="63"/>
    </location>
</feature>
<feature type="strand" evidence="3">
    <location>
        <begin position="108"/>
        <end position="111"/>
    </location>
</feature>
<feature type="turn" evidence="3">
    <location>
        <begin position="142"/>
        <end position="146"/>
    </location>
</feature>
<feature type="strand" evidence="3">
    <location>
        <begin position="149"/>
        <end position="152"/>
    </location>
</feature>
<feature type="strand" evidence="3">
    <location>
        <begin position="156"/>
        <end position="158"/>
    </location>
</feature>
<feature type="helix" evidence="3">
    <location>
        <begin position="160"/>
        <end position="169"/>
    </location>
</feature>
<feature type="strand" evidence="3">
    <location>
        <begin position="191"/>
        <end position="195"/>
    </location>
</feature>
<feature type="helix" evidence="3">
    <location>
        <begin position="205"/>
        <end position="208"/>
    </location>
</feature>
<feature type="strand" evidence="3">
    <location>
        <begin position="211"/>
        <end position="217"/>
    </location>
</feature>
<feature type="helix" evidence="3">
    <location>
        <begin position="223"/>
        <end position="238"/>
    </location>
</feature>
<feature type="helix" evidence="3">
    <location>
        <begin position="240"/>
        <end position="246"/>
    </location>
</feature>
<feature type="helix" evidence="3">
    <location>
        <begin position="248"/>
        <end position="264"/>
    </location>
</feature>
<feature type="helix" evidence="3">
    <location>
        <begin position="265"/>
        <end position="267"/>
    </location>
</feature>
<feature type="helix" evidence="3">
    <location>
        <begin position="272"/>
        <end position="284"/>
    </location>
</feature>
<feature type="strand" evidence="3">
    <location>
        <begin position="288"/>
        <end position="290"/>
    </location>
</feature>
<feature type="helix" evidence="3">
    <location>
        <begin position="291"/>
        <end position="306"/>
    </location>
</feature>
<feature type="helix" evidence="3">
    <location>
        <begin position="314"/>
        <end position="325"/>
    </location>
</feature>
<feature type="helix" evidence="3">
    <location>
        <begin position="326"/>
        <end position="328"/>
    </location>
</feature>
<feature type="helix" evidence="3">
    <location>
        <begin position="339"/>
        <end position="351"/>
    </location>
</feature>
<name>CHLI_SYNY3</name>
<proteinExistence type="evidence at protein level"/>
<organism>
    <name type="scientific">Synechocystis sp. (strain ATCC 27184 / PCC 6803 / Kazusa)</name>
    <dbReference type="NCBI Taxonomy" id="1111708"/>
    <lineage>
        <taxon>Bacteria</taxon>
        <taxon>Bacillati</taxon>
        <taxon>Cyanobacteriota</taxon>
        <taxon>Cyanophyceae</taxon>
        <taxon>Synechococcales</taxon>
        <taxon>Merismopediaceae</taxon>
        <taxon>Synechocystis</taxon>
    </lineage>
</organism>
<protein>
    <recommendedName>
        <fullName>Magnesium-chelatase subunit ChlI</fullName>
        <ecNumber>6.6.1.1</ecNumber>
    </recommendedName>
    <alternativeName>
        <fullName>Mg-protoporphyrin IX chelatase</fullName>
    </alternativeName>
</protein>
<evidence type="ECO:0000255" key="1"/>
<evidence type="ECO:0000305" key="2"/>
<evidence type="ECO:0007829" key="3">
    <source>
        <dbReference type="PDB" id="6L8D"/>
    </source>
</evidence>
<accession>P51634</accession>
<accession>P73140</accession>
<comment type="function">
    <text>Involved in chlorophyll biosynthesis; introduces a magnesium ion into protoporphyrin IX to yield Mg-protoporphyrin IX.</text>
</comment>
<comment type="catalytic activity">
    <reaction>
        <text>protoporphyrin IX + Mg(2+) + ATP + H2O = Mg-protoporphyrin IX + ADP + phosphate + 3 H(+)</text>
        <dbReference type="Rhea" id="RHEA:13961"/>
        <dbReference type="ChEBI" id="CHEBI:15377"/>
        <dbReference type="ChEBI" id="CHEBI:15378"/>
        <dbReference type="ChEBI" id="CHEBI:18420"/>
        <dbReference type="ChEBI" id="CHEBI:30616"/>
        <dbReference type="ChEBI" id="CHEBI:43474"/>
        <dbReference type="ChEBI" id="CHEBI:57306"/>
        <dbReference type="ChEBI" id="CHEBI:60492"/>
        <dbReference type="ChEBI" id="CHEBI:456216"/>
        <dbReference type="EC" id="6.6.1.1"/>
    </reaction>
</comment>
<comment type="pathway">
    <text>Porphyrin-containing compound metabolism; chlorophyll biosynthesis.</text>
</comment>
<comment type="similarity">
    <text evidence="2">Belongs to the Mg-chelatase subunits D/I family.</text>
</comment>